<feature type="chain" id="PRO_0000389492" description="Uncharacterized protein YyzM">
    <location>
        <begin position="1"/>
        <end position="68"/>
    </location>
</feature>
<organism>
    <name type="scientific">Bacillus subtilis (strain 168)</name>
    <dbReference type="NCBI Taxonomy" id="224308"/>
    <lineage>
        <taxon>Bacteria</taxon>
        <taxon>Bacillati</taxon>
        <taxon>Bacillota</taxon>
        <taxon>Bacilli</taxon>
        <taxon>Bacillales</taxon>
        <taxon>Bacillaceae</taxon>
        <taxon>Bacillus</taxon>
    </lineage>
</organism>
<name>YYZM_BACSU</name>
<keyword id="KW-1185">Reference proteome</keyword>
<dbReference type="EMBL" id="AL009126">
    <property type="protein sequence ID" value="CAX52723.1"/>
    <property type="molecule type" value="Genomic_DNA"/>
</dbReference>
<dbReference type="RefSeq" id="WP_003226838.1">
    <property type="nucleotide sequence ID" value="NZ_OZ025638.1"/>
</dbReference>
<dbReference type="RefSeq" id="YP_003097803.1">
    <property type="nucleotide sequence ID" value="NC_000964.3"/>
</dbReference>
<dbReference type="FunCoup" id="C0H3V8">
    <property type="interactions" value="14"/>
</dbReference>
<dbReference type="STRING" id="224308.BSU40939"/>
<dbReference type="PaxDb" id="224308-BSU40939"/>
<dbReference type="EnsemblBacteria" id="CAX52723">
    <property type="protein sequence ID" value="CAX52723"/>
    <property type="gene ID" value="BSU_40939"/>
</dbReference>
<dbReference type="GeneID" id="8302952"/>
<dbReference type="KEGG" id="bsu:BSU40939"/>
<dbReference type="PATRIC" id="fig|224308.179.peg.4435"/>
<dbReference type="eggNOG" id="COG4481">
    <property type="taxonomic scope" value="Bacteria"/>
</dbReference>
<dbReference type="InParanoid" id="C0H3V8"/>
<dbReference type="OrthoDB" id="9802710at2"/>
<dbReference type="PhylomeDB" id="C0H3V8"/>
<dbReference type="BioCyc" id="BSUB:BSU40939-MONOMER"/>
<dbReference type="Proteomes" id="UP000001570">
    <property type="component" value="Chromosome"/>
</dbReference>
<dbReference type="InterPro" id="IPR009296">
    <property type="entry name" value="DUF951"/>
</dbReference>
<dbReference type="PANTHER" id="PTHR38455:SF1">
    <property type="entry name" value="DUF951 DOMAIN-CONTAINING PROTEIN"/>
    <property type="match status" value="1"/>
</dbReference>
<dbReference type="PANTHER" id="PTHR38455">
    <property type="entry name" value="HYPOTHETICAL CYTOSOLIC PROTEIN"/>
    <property type="match status" value="1"/>
</dbReference>
<dbReference type="Pfam" id="PF06107">
    <property type="entry name" value="DUF951"/>
    <property type="match status" value="1"/>
</dbReference>
<dbReference type="PIRSF" id="PIRSF037263">
    <property type="entry name" value="DUF951_bac"/>
    <property type="match status" value="1"/>
</dbReference>
<gene>
    <name type="primary">yyzM</name>
    <name type="ordered locus">BSU40939</name>
</gene>
<proteinExistence type="predicted"/>
<protein>
    <recommendedName>
        <fullName>Uncharacterized protein YyzM</fullName>
    </recommendedName>
</protein>
<accession>C0H3V8</accession>
<sequence>MADKDFGLNDIVEMKKPHPCGANSWKIIRMGMDIRIKCEGCSHSVMIPRREFERKLKKVLVKHEEPTS</sequence>
<reference key="1">
    <citation type="journal article" date="1997" name="Nature">
        <title>The complete genome sequence of the Gram-positive bacterium Bacillus subtilis.</title>
        <authorList>
            <person name="Kunst F."/>
            <person name="Ogasawara N."/>
            <person name="Moszer I."/>
            <person name="Albertini A.M."/>
            <person name="Alloni G."/>
            <person name="Azevedo V."/>
            <person name="Bertero M.G."/>
            <person name="Bessieres P."/>
            <person name="Bolotin A."/>
            <person name="Borchert S."/>
            <person name="Borriss R."/>
            <person name="Boursier L."/>
            <person name="Brans A."/>
            <person name="Braun M."/>
            <person name="Brignell S.C."/>
            <person name="Bron S."/>
            <person name="Brouillet S."/>
            <person name="Bruschi C.V."/>
            <person name="Caldwell B."/>
            <person name="Capuano V."/>
            <person name="Carter N.M."/>
            <person name="Choi S.-K."/>
            <person name="Codani J.-J."/>
            <person name="Connerton I.F."/>
            <person name="Cummings N.J."/>
            <person name="Daniel R.A."/>
            <person name="Denizot F."/>
            <person name="Devine K.M."/>
            <person name="Duesterhoeft A."/>
            <person name="Ehrlich S.D."/>
            <person name="Emmerson P.T."/>
            <person name="Entian K.-D."/>
            <person name="Errington J."/>
            <person name="Fabret C."/>
            <person name="Ferrari E."/>
            <person name="Foulger D."/>
            <person name="Fritz C."/>
            <person name="Fujita M."/>
            <person name="Fujita Y."/>
            <person name="Fuma S."/>
            <person name="Galizzi A."/>
            <person name="Galleron N."/>
            <person name="Ghim S.-Y."/>
            <person name="Glaser P."/>
            <person name="Goffeau A."/>
            <person name="Golightly E.J."/>
            <person name="Grandi G."/>
            <person name="Guiseppi G."/>
            <person name="Guy B.J."/>
            <person name="Haga K."/>
            <person name="Haiech J."/>
            <person name="Harwood C.R."/>
            <person name="Henaut A."/>
            <person name="Hilbert H."/>
            <person name="Holsappel S."/>
            <person name="Hosono S."/>
            <person name="Hullo M.-F."/>
            <person name="Itaya M."/>
            <person name="Jones L.-M."/>
            <person name="Joris B."/>
            <person name="Karamata D."/>
            <person name="Kasahara Y."/>
            <person name="Klaerr-Blanchard M."/>
            <person name="Klein C."/>
            <person name="Kobayashi Y."/>
            <person name="Koetter P."/>
            <person name="Koningstein G."/>
            <person name="Krogh S."/>
            <person name="Kumano M."/>
            <person name="Kurita K."/>
            <person name="Lapidus A."/>
            <person name="Lardinois S."/>
            <person name="Lauber J."/>
            <person name="Lazarevic V."/>
            <person name="Lee S.-M."/>
            <person name="Levine A."/>
            <person name="Liu H."/>
            <person name="Masuda S."/>
            <person name="Mauel C."/>
            <person name="Medigue C."/>
            <person name="Medina N."/>
            <person name="Mellado R.P."/>
            <person name="Mizuno M."/>
            <person name="Moestl D."/>
            <person name="Nakai S."/>
            <person name="Noback M."/>
            <person name="Noone D."/>
            <person name="O'Reilly M."/>
            <person name="Ogawa K."/>
            <person name="Ogiwara A."/>
            <person name="Oudega B."/>
            <person name="Park S.-H."/>
            <person name="Parro V."/>
            <person name="Pohl T.M."/>
            <person name="Portetelle D."/>
            <person name="Porwollik S."/>
            <person name="Prescott A.M."/>
            <person name="Presecan E."/>
            <person name="Pujic P."/>
            <person name="Purnelle B."/>
            <person name="Rapoport G."/>
            <person name="Rey M."/>
            <person name="Reynolds S."/>
            <person name="Rieger M."/>
            <person name="Rivolta C."/>
            <person name="Rocha E."/>
            <person name="Roche B."/>
            <person name="Rose M."/>
            <person name="Sadaie Y."/>
            <person name="Sato T."/>
            <person name="Scanlan E."/>
            <person name="Schleich S."/>
            <person name="Schroeter R."/>
            <person name="Scoffone F."/>
            <person name="Sekiguchi J."/>
            <person name="Sekowska A."/>
            <person name="Seror S.J."/>
            <person name="Serror P."/>
            <person name="Shin B.-S."/>
            <person name="Soldo B."/>
            <person name="Sorokin A."/>
            <person name="Tacconi E."/>
            <person name="Takagi T."/>
            <person name="Takahashi H."/>
            <person name="Takemaru K."/>
            <person name="Takeuchi M."/>
            <person name="Tamakoshi A."/>
            <person name="Tanaka T."/>
            <person name="Terpstra P."/>
            <person name="Tognoni A."/>
            <person name="Tosato V."/>
            <person name="Uchiyama S."/>
            <person name="Vandenbol M."/>
            <person name="Vannier F."/>
            <person name="Vassarotti A."/>
            <person name="Viari A."/>
            <person name="Wambutt R."/>
            <person name="Wedler E."/>
            <person name="Wedler H."/>
            <person name="Weitzenegger T."/>
            <person name="Winters P."/>
            <person name="Wipat A."/>
            <person name="Yamamoto H."/>
            <person name="Yamane K."/>
            <person name="Yasumoto K."/>
            <person name="Yata K."/>
            <person name="Yoshida K."/>
            <person name="Yoshikawa H.-F."/>
            <person name="Zumstein E."/>
            <person name="Yoshikawa H."/>
            <person name="Danchin A."/>
        </authorList>
    </citation>
    <scope>NUCLEOTIDE SEQUENCE [LARGE SCALE GENOMIC DNA]</scope>
    <source>
        <strain>168</strain>
    </source>
</reference>
<reference key="2">
    <citation type="journal article" date="2009" name="Microbiology">
        <title>From a consortium sequence to a unified sequence: the Bacillus subtilis 168 reference genome a decade later.</title>
        <authorList>
            <person name="Barbe V."/>
            <person name="Cruveiller S."/>
            <person name="Kunst F."/>
            <person name="Lenoble P."/>
            <person name="Meurice G."/>
            <person name="Sekowska A."/>
            <person name="Vallenet D."/>
            <person name="Wang T."/>
            <person name="Moszer I."/>
            <person name="Medigue C."/>
            <person name="Danchin A."/>
        </authorList>
    </citation>
    <scope>IDENTIFICATION</scope>
</reference>